<reference key="1">
    <citation type="journal article" date="2009" name="Appl. Environ. Microbiol.">
        <title>Three genomes from the phylum Acidobacteria provide insight into the lifestyles of these microorganisms in soils.</title>
        <authorList>
            <person name="Ward N.L."/>
            <person name="Challacombe J.F."/>
            <person name="Janssen P.H."/>
            <person name="Henrissat B."/>
            <person name="Coutinho P.M."/>
            <person name="Wu M."/>
            <person name="Xie G."/>
            <person name="Haft D.H."/>
            <person name="Sait M."/>
            <person name="Badger J."/>
            <person name="Barabote R.D."/>
            <person name="Bradley B."/>
            <person name="Brettin T.S."/>
            <person name="Brinkac L.M."/>
            <person name="Bruce D."/>
            <person name="Creasy T."/>
            <person name="Daugherty S.C."/>
            <person name="Davidsen T.M."/>
            <person name="DeBoy R.T."/>
            <person name="Detter J.C."/>
            <person name="Dodson R.J."/>
            <person name="Durkin A.S."/>
            <person name="Ganapathy A."/>
            <person name="Gwinn-Giglio M."/>
            <person name="Han C.S."/>
            <person name="Khouri H."/>
            <person name="Kiss H."/>
            <person name="Kothari S.P."/>
            <person name="Madupu R."/>
            <person name="Nelson K.E."/>
            <person name="Nelson W.C."/>
            <person name="Paulsen I."/>
            <person name="Penn K."/>
            <person name="Ren Q."/>
            <person name="Rosovitz M.J."/>
            <person name="Selengut J.D."/>
            <person name="Shrivastava S."/>
            <person name="Sullivan S.A."/>
            <person name="Tapia R."/>
            <person name="Thompson L.S."/>
            <person name="Watkins K.L."/>
            <person name="Yang Q."/>
            <person name="Yu C."/>
            <person name="Zafar N."/>
            <person name="Zhou L."/>
            <person name="Kuske C.R."/>
        </authorList>
    </citation>
    <scope>NUCLEOTIDE SEQUENCE [LARGE SCALE GENOMIC DNA]</scope>
    <source>
        <strain>Ellin345</strain>
    </source>
</reference>
<feature type="chain" id="PRO_0000258627" description="Large ribosomal subunit protein bL35">
    <location>
        <begin position="1"/>
        <end position="64"/>
    </location>
</feature>
<feature type="region of interest" description="Disordered" evidence="2">
    <location>
        <begin position="1"/>
        <end position="25"/>
    </location>
</feature>
<keyword id="KW-1185">Reference proteome</keyword>
<keyword id="KW-0687">Ribonucleoprotein</keyword>
<keyword id="KW-0689">Ribosomal protein</keyword>
<gene>
    <name evidence="1" type="primary">rpmI</name>
    <name type="ordered locus">Acid345_0714</name>
</gene>
<comment type="similarity">
    <text evidence="1">Belongs to the bacterial ribosomal protein bL35 family.</text>
</comment>
<comment type="sequence caution" evidence="3">
    <conflict type="erroneous initiation">
        <sequence resource="EMBL-CDS" id="ABF39719"/>
    </conflict>
</comment>
<name>RL35_KORVE</name>
<sequence length="64" mass="7356">MPKLKTHSGAAKRFKKTATGKVKRSKAFKRHILTSKSTKKKRHFDMEGLVSKADTPKIKRMIPY</sequence>
<dbReference type="EMBL" id="CP000360">
    <property type="protein sequence ID" value="ABF39719.1"/>
    <property type="status" value="ALT_INIT"/>
    <property type="molecule type" value="Genomic_DNA"/>
</dbReference>
<dbReference type="RefSeq" id="WP_041855409.1">
    <property type="nucleotide sequence ID" value="NC_008009.1"/>
</dbReference>
<dbReference type="SMR" id="Q1ITT1"/>
<dbReference type="STRING" id="204669.Acid345_0714"/>
<dbReference type="EnsemblBacteria" id="ABF39719">
    <property type="protein sequence ID" value="ABF39719"/>
    <property type="gene ID" value="Acid345_0714"/>
</dbReference>
<dbReference type="KEGG" id="aba:Acid345_0714"/>
<dbReference type="eggNOG" id="COG0291">
    <property type="taxonomic scope" value="Bacteria"/>
</dbReference>
<dbReference type="HOGENOM" id="CLU_169643_4_3_0"/>
<dbReference type="OrthoDB" id="47476at2"/>
<dbReference type="Proteomes" id="UP000002432">
    <property type="component" value="Chromosome"/>
</dbReference>
<dbReference type="GO" id="GO:0022625">
    <property type="term" value="C:cytosolic large ribosomal subunit"/>
    <property type="evidence" value="ECO:0007669"/>
    <property type="project" value="TreeGrafter"/>
</dbReference>
<dbReference type="GO" id="GO:0003735">
    <property type="term" value="F:structural constituent of ribosome"/>
    <property type="evidence" value="ECO:0007669"/>
    <property type="project" value="InterPro"/>
</dbReference>
<dbReference type="GO" id="GO:0006412">
    <property type="term" value="P:translation"/>
    <property type="evidence" value="ECO:0007669"/>
    <property type="project" value="UniProtKB-UniRule"/>
</dbReference>
<dbReference type="FunFam" id="4.10.410.60:FF:000001">
    <property type="entry name" value="50S ribosomal protein L35"/>
    <property type="match status" value="1"/>
</dbReference>
<dbReference type="Gene3D" id="4.10.410.60">
    <property type="match status" value="1"/>
</dbReference>
<dbReference type="HAMAP" id="MF_00514">
    <property type="entry name" value="Ribosomal_bL35"/>
    <property type="match status" value="1"/>
</dbReference>
<dbReference type="InterPro" id="IPR001706">
    <property type="entry name" value="Ribosomal_bL35"/>
</dbReference>
<dbReference type="InterPro" id="IPR021137">
    <property type="entry name" value="Ribosomal_bL35-like"/>
</dbReference>
<dbReference type="InterPro" id="IPR018265">
    <property type="entry name" value="Ribosomal_bL35_CS"/>
</dbReference>
<dbReference type="InterPro" id="IPR037229">
    <property type="entry name" value="Ribosomal_bL35_sf"/>
</dbReference>
<dbReference type="NCBIfam" id="TIGR00001">
    <property type="entry name" value="rpmI_bact"/>
    <property type="match status" value="1"/>
</dbReference>
<dbReference type="PANTHER" id="PTHR33343">
    <property type="entry name" value="54S RIBOSOMAL PROTEIN BL35M"/>
    <property type="match status" value="1"/>
</dbReference>
<dbReference type="PANTHER" id="PTHR33343:SF1">
    <property type="entry name" value="LARGE RIBOSOMAL SUBUNIT PROTEIN BL35M"/>
    <property type="match status" value="1"/>
</dbReference>
<dbReference type="Pfam" id="PF01632">
    <property type="entry name" value="Ribosomal_L35p"/>
    <property type="match status" value="1"/>
</dbReference>
<dbReference type="PRINTS" id="PR00064">
    <property type="entry name" value="RIBOSOMALL35"/>
</dbReference>
<dbReference type="SUPFAM" id="SSF143034">
    <property type="entry name" value="L35p-like"/>
    <property type="match status" value="1"/>
</dbReference>
<dbReference type="PROSITE" id="PS00936">
    <property type="entry name" value="RIBOSOMAL_L35"/>
    <property type="match status" value="1"/>
</dbReference>
<protein>
    <recommendedName>
        <fullName evidence="1">Large ribosomal subunit protein bL35</fullName>
    </recommendedName>
    <alternativeName>
        <fullName evidence="3">50S ribosomal protein L35</fullName>
    </alternativeName>
</protein>
<evidence type="ECO:0000255" key="1">
    <source>
        <dbReference type="HAMAP-Rule" id="MF_00514"/>
    </source>
</evidence>
<evidence type="ECO:0000256" key="2">
    <source>
        <dbReference type="SAM" id="MobiDB-lite"/>
    </source>
</evidence>
<evidence type="ECO:0000305" key="3"/>
<accession>Q1ITT1</accession>
<proteinExistence type="inferred from homology"/>
<organism>
    <name type="scientific">Koribacter versatilis (strain Ellin345)</name>
    <dbReference type="NCBI Taxonomy" id="204669"/>
    <lineage>
        <taxon>Bacteria</taxon>
        <taxon>Pseudomonadati</taxon>
        <taxon>Acidobacteriota</taxon>
        <taxon>Terriglobia</taxon>
        <taxon>Terriglobales</taxon>
        <taxon>Candidatus Korobacteraceae</taxon>
        <taxon>Candidatus Korobacter</taxon>
    </lineage>
</organism>